<reference key="1">
    <citation type="journal article" date="2006" name="J. Bacteriol.">
        <title>Comparative genomic evidence for a close relationship between the dimorphic prosthecate bacteria Hyphomonas neptunium and Caulobacter crescentus.</title>
        <authorList>
            <person name="Badger J.H."/>
            <person name="Hoover T.R."/>
            <person name="Brun Y.V."/>
            <person name="Weiner R.M."/>
            <person name="Laub M.T."/>
            <person name="Alexandre G."/>
            <person name="Mrazek J."/>
            <person name="Ren Q."/>
            <person name="Paulsen I.T."/>
            <person name="Nelson K.E."/>
            <person name="Khouri H.M."/>
            <person name="Radune D."/>
            <person name="Sosa J."/>
            <person name="Dodson R.J."/>
            <person name="Sullivan S.A."/>
            <person name="Rosovitz M.J."/>
            <person name="Madupu R."/>
            <person name="Brinkac L.M."/>
            <person name="Durkin A.S."/>
            <person name="Daugherty S.C."/>
            <person name="Kothari S.P."/>
            <person name="Giglio M.G."/>
            <person name="Zhou L."/>
            <person name="Haft D.H."/>
            <person name="Selengut J.D."/>
            <person name="Davidsen T.M."/>
            <person name="Yang Q."/>
            <person name="Zafar N."/>
            <person name="Ward N.L."/>
        </authorList>
    </citation>
    <scope>NUCLEOTIDE SEQUENCE [LARGE SCALE GENOMIC DNA]</scope>
    <source>
        <strain>ATCC 15444</strain>
    </source>
</reference>
<dbReference type="EC" id="4.1.1.37" evidence="1"/>
<dbReference type="EMBL" id="CP000158">
    <property type="protein sequence ID" value="ABI78662.1"/>
    <property type="molecule type" value="Genomic_DNA"/>
</dbReference>
<dbReference type="RefSeq" id="WP_011648533.1">
    <property type="nucleotide sequence ID" value="NC_008358.1"/>
</dbReference>
<dbReference type="SMR" id="Q0BWA4"/>
<dbReference type="STRING" id="228405.HNE_3568"/>
<dbReference type="KEGG" id="hne:HNE_3568"/>
<dbReference type="eggNOG" id="COG0407">
    <property type="taxonomic scope" value="Bacteria"/>
</dbReference>
<dbReference type="HOGENOM" id="CLU_040933_0_0_5"/>
<dbReference type="UniPathway" id="UPA00251">
    <property type="reaction ID" value="UER00321"/>
</dbReference>
<dbReference type="Proteomes" id="UP000001959">
    <property type="component" value="Chromosome"/>
</dbReference>
<dbReference type="GO" id="GO:0005829">
    <property type="term" value="C:cytosol"/>
    <property type="evidence" value="ECO:0007669"/>
    <property type="project" value="TreeGrafter"/>
</dbReference>
<dbReference type="GO" id="GO:0004853">
    <property type="term" value="F:uroporphyrinogen decarboxylase activity"/>
    <property type="evidence" value="ECO:0007669"/>
    <property type="project" value="UniProtKB-UniRule"/>
</dbReference>
<dbReference type="GO" id="GO:0019353">
    <property type="term" value="P:protoporphyrinogen IX biosynthetic process from glutamate"/>
    <property type="evidence" value="ECO:0007669"/>
    <property type="project" value="TreeGrafter"/>
</dbReference>
<dbReference type="CDD" id="cd00717">
    <property type="entry name" value="URO-D"/>
    <property type="match status" value="1"/>
</dbReference>
<dbReference type="Gene3D" id="3.20.20.210">
    <property type="match status" value="1"/>
</dbReference>
<dbReference type="HAMAP" id="MF_00218">
    <property type="entry name" value="URO_D"/>
    <property type="match status" value="1"/>
</dbReference>
<dbReference type="InterPro" id="IPR038071">
    <property type="entry name" value="UROD/MetE-like_sf"/>
</dbReference>
<dbReference type="InterPro" id="IPR006361">
    <property type="entry name" value="Uroporphyrinogen_deCO2ase_HemE"/>
</dbReference>
<dbReference type="InterPro" id="IPR000257">
    <property type="entry name" value="Uroporphyrinogen_deCOase"/>
</dbReference>
<dbReference type="NCBIfam" id="TIGR01464">
    <property type="entry name" value="hemE"/>
    <property type="match status" value="1"/>
</dbReference>
<dbReference type="PANTHER" id="PTHR21091">
    <property type="entry name" value="METHYLTETRAHYDROFOLATE:HOMOCYSTEINE METHYLTRANSFERASE RELATED"/>
    <property type="match status" value="1"/>
</dbReference>
<dbReference type="PANTHER" id="PTHR21091:SF169">
    <property type="entry name" value="UROPORPHYRINOGEN DECARBOXYLASE"/>
    <property type="match status" value="1"/>
</dbReference>
<dbReference type="Pfam" id="PF01208">
    <property type="entry name" value="URO-D"/>
    <property type="match status" value="1"/>
</dbReference>
<dbReference type="SUPFAM" id="SSF51726">
    <property type="entry name" value="UROD/MetE-like"/>
    <property type="match status" value="1"/>
</dbReference>
<dbReference type="PROSITE" id="PS00906">
    <property type="entry name" value="UROD_1"/>
    <property type="match status" value="1"/>
</dbReference>
<dbReference type="PROSITE" id="PS00907">
    <property type="entry name" value="UROD_2"/>
    <property type="match status" value="1"/>
</dbReference>
<proteinExistence type="inferred from homology"/>
<sequence>MATSVKKLLAGLSGEVFKVPPVWMMRQAGRHLPEYLETRARSKDFLDFCYTPSLASEATLQPIRRYGMDGAILFADILLILDAMGLKVAFEKGEGPLVEQINGPSDLARVSPQKAADRLSPVYETVSRVKAALPAQTTLIGFAGSPWTVSLYAIEGRGKTDKSTAWRWAHGRPDDLAAVMDLVAEATAEYLARQVEAGAEALMLFDSWAEGLPDNIFREVVIAPTRKLVALLRERGITVPIIGFPRGAGVMLPEYVRETGVTAVGLDTAASPAFINAELAKGFPVQGHLDPLLLIEGGARLDARVRELLDAYRGRPHIFNLGHGVRPETPIAHVERVLELIRNA</sequence>
<organism>
    <name type="scientific">Hyphomonas neptunium (strain ATCC 15444)</name>
    <dbReference type="NCBI Taxonomy" id="228405"/>
    <lineage>
        <taxon>Bacteria</taxon>
        <taxon>Pseudomonadati</taxon>
        <taxon>Pseudomonadota</taxon>
        <taxon>Alphaproteobacteria</taxon>
        <taxon>Hyphomonadales</taxon>
        <taxon>Hyphomonadaceae</taxon>
        <taxon>Hyphomonas</taxon>
    </lineage>
</organism>
<keyword id="KW-0963">Cytoplasm</keyword>
<keyword id="KW-0210">Decarboxylase</keyword>
<keyword id="KW-0456">Lyase</keyword>
<keyword id="KW-0627">Porphyrin biosynthesis</keyword>
<keyword id="KW-1185">Reference proteome</keyword>
<comment type="function">
    <text evidence="1">Catalyzes the decarboxylation of four acetate groups of uroporphyrinogen-III to yield coproporphyrinogen-III.</text>
</comment>
<comment type="catalytic activity">
    <reaction evidence="1">
        <text>uroporphyrinogen III + 4 H(+) = coproporphyrinogen III + 4 CO2</text>
        <dbReference type="Rhea" id="RHEA:19865"/>
        <dbReference type="ChEBI" id="CHEBI:15378"/>
        <dbReference type="ChEBI" id="CHEBI:16526"/>
        <dbReference type="ChEBI" id="CHEBI:57308"/>
        <dbReference type="ChEBI" id="CHEBI:57309"/>
        <dbReference type="EC" id="4.1.1.37"/>
    </reaction>
</comment>
<comment type="pathway">
    <text evidence="1">Porphyrin-containing compound metabolism; protoporphyrin-IX biosynthesis; coproporphyrinogen-III from 5-aminolevulinate: step 4/4.</text>
</comment>
<comment type="subunit">
    <text evidence="1">Homodimer.</text>
</comment>
<comment type="subcellular location">
    <subcellularLocation>
        <location evidence="1">Cytoplasm</location>
    </subcellularLocation>
</comment>
<comment type="similarity">
    <text evidence="1">Belongs to the uroporphyrinogen decarboxylase family.</text>
</comment>
<accession>Q0BWA4</accession>
<name>DCUP_HYPNA</name>
<feature type="chain" id="PRO_0000325655" description="Uroporphyrinogen decarboxylase">
    <location>
        <begin position="1"/>
        <end position="344"/>
    </location>
</feature>
<feature type="binding site" evidence="1">
    <location>
        <begin position="26"/>
        <end position="30"/>
    </location>
    <ligand>
        <name>substrate</name>
    </ligand>
</feature>
<feature type="binding site" evidence="1">
    <location>
        <position position="76"/>
    </location>
    <ligand>
        <name>substrate</name>
    </ligand>
</feature>
<feature type="binding site" evidence="1">
    <location>
        <position position="152"/>
    </location>
    <ligand>
        <name>substrate</name>
    </ligand>
</feature>
<feature type="binding site" evidence="1">
    <location>
        <position position="207"/>
    </location>
    <ligand>
        <name>substrate</name>
    </ligand>
</feature>
<feature type="binding site" evidence="1">
    <location>
        <position position="323"/>
    </location>
    <ligand>
        <name>substrate</name>
    </ligand>
</feature>
<feature type="site" description="Transition state stabilizer" evidence="1">
    <location>
        <position position="76"/>
    </location>
</feature>
<protein>
    <recommendedName>
        <fullName evidence="1">Uroporphyrinogen decarboxylase</fullName>
        <shortName evidence="1">UPD</shortName>
        <shortName evidence="1">URO-D</shortName>
        <ecNumber evidence="1">4.1.1.37</ecNumber>
    </recommendedName>
</protein>
<gene>
    <name evidence="1" type="primary">hemE</name>
    <name type="ordered locus">HNE_3568</name>
</gene>
<evidence type="ECO:0000255" key="1">
    <source>
        <dbReference type="HAMAP-Rule" id="MF_00218"/>
    </source>
</evidence>